<gene>
    <name evidence="4" type="primary">TPS1</name>
    <name type="ORF">DLAC_07096</name>
</gene>
<keyword id="KW-0456">Lyase</keyword>
<keyword id="KW-0479">Metal-binding</keyword>
<keyword id="KW-1185">Reference proteome</keyword>
<evidence type="ECO:0000250" key="1">
    <source>
        <dbReference type="UniProtKB" id="Q54BE5"/>
    </source>
</evidence>
<evidence type="ECO:0000250" key="2">
    <source>
        <dbReference type="UniProtKB" id="Q55E23"/>
    </source>
</evidence>
<evidence type="ECO:0000269" key="3">
    <source>
    </source>
</evidence>
<evidence type="ECO:0000303" key="4">
    <source>
    </source>
</evidence>
<evidence type="ECO:0000305" key="5"/>
<proteinExistence type="evidence at protein level"/>
<accession>A0A151ZEA6</accession>
<dbReference type="EC" id="4.2.3.160" evidence="3"/>
<dbReference type="EMBL" id="MG262461">
    <property type="protein sequence ID" value="AXN72969.1"/>
    <property type="molecule type" value="mRNA"/>
</dbReference>
<dbReference type="EMBL" id="LODT01000031">
    <property type="protein sequence ID" value="KYQ92249.1"/>
    <property type="molecule type" value="Genomic_DNA"/>
</dbReference>
<dbReference type="SMR" id="A0A151ZEA6"/>
<dbReference type="STRING" id="361077.A0A151ZEA6"/>
<dbReference type="EnsemblProtists" id="KYQ92249">
    <property type="protein sequence ID" value="KYQ92249"/>
    <property type="gene ID" value="DLAC_07096"/>
</dbReference>
<dbReference type="InParanoid" id="A0A151ZEA6"/>
<dbReference type="OMA" id="WSMQTPR"/>
<dbReference type="OrthoDB" id="6486656at2759"/>
<dbReference type="Proteomes" id="UP000076078">
    <property type="component" value="Unassembled WGS sequence"/>
</dbReference>
<dbReference type="GO" id="GO:0046872">
    <property type="term" value="F:metal ion binding"/>
    <property type="evidence" value="ECO:0007669"/>
    <property type="project" value="UniProtKB-KW"/>
</dbReference>
<dbReference type="GO" id="GO:0010333">
    <property type="term" value="F:terpene synthase activity"/>
    <property type="evidence" value="ECO:0007669"/>
    <property type="project" value="InterPro"/>
</dbReference>
<dbReference type="GO" id="GO:0046246">
    <property type="term" value="P:terpene biosynthetic process"/>
    <property type="evidence" value="ECO:0007669"/>
    <property type="project" value="UniProtKB-ARBA"/>
</dbReference>
<dbReference type="FunFam" id="1.10.600.10:FF:000047">
    <property type="entry name" value="Terpene synthase"/>
    <property type="match status" value="1"/>
</dbReference>
<dbReference type="Gene3D" id="1.10.600.10">
    <property type="entry name" value="Farnesyl Diphosphate Synthase"/>
    <property type="match status" value="1"/>
</dbReference>
<dbReference type="InterPro" id="IPR008949">
    <property type="entry name" value="Isoprenoid_synthase_dom_sf"/>
</dbReference>
<dbReference type="InterPro" id="IPR034686">
    <property type="entry name" value="Terpene_cyclase-like_2"/>
</dbReference>
<dbReference type="PANTHER" id="PTHR35201">
    <property type="entry name" value="TERPENE SYNTHASE"/>
    <property type="match status" value="1"/>
</dbReference>
<dbReference type="PANTHER" id="PTHR35201:SF3">
    <property type="entry name" value="TERPENE SYNTHASE 2-RELATED"/>
    <property type="match status" value="1"/>
</dbReference>
<dbReference type="Pfam" id="PF19086">
    <property type="entry name" value="Terpene_syn_C_2"/>
    <property type="match status" value="1"/>
</dbReference>
<dbReference type="SUPFAM" id="SSF48576">
    <property type="entry name" value="Terpenoid synthases"/>
    <property type="match status" value="1"/>
</dbReference>
<feature type="chain" id="PRO_0000457033" description="Terpene synthase 1">
    <location>
        <begin position="1"/>
        <end position="353"/>
    </location>
</feature>
<feature type="short sequence motif" description="DDxx(x)D/E motif" evidence="1">
    <location>
        <begin position="81"/>
        <end position="86"/>
    </location>
</feature>
<feature type="short sequence motif" description="NDxxSxxxD/E motif" evidence="1">
    <location>
        <begin position="222"/>
        <end position="230"/>
    </location>
</feature>
<name>TPS1_TIELA</name>
<sequence>MSLSLNDIKFPSSWDLSPNDLSYIDDIYQEGLDLGVWRKDNQRDKLANENVVSLSKYFWPKVEYKKLIMGGELMLWFFTFDDAIDAGLYSDEKTAEIVKRMDRVFMDGTLPENPTGPEKVALSLRTKCKIMCGEQRKGTFNRFITSCIQWVDSIVPFNKVIANGDSPDLELYGFLRKVNIGAYPCVTLTEVMLESTLEQYIWFDPRWIKMNENIAIVVTLVNDLVSYEKEVRDKMGILNPLFFLQTKLNIELSESYKKLVDMIHHWISEYNELEERFLQLFTTDEEKKQIQFMLDHLHYLISGSRLWSMQTPRYISNTSPFIEMRKNCASLSITSFVSNCAESQRDLKKRKRV</sequence>
<organism>
    <name type="scientific">Tieghemostelium lacteum</name>
    <name type="common">Slime mold</name>
    <name type="synonym">Dictyostelium lacteum</name>
    <dbReference type="NCBI Taxonomy" id="361077"/>
    <lineage>
        <taxon>Eukaryota</taxon>
        <taxon>Amoebozoa</taxon>
        <taxon>Evosea</taxon>
        <taxon>Eumycetozoa</taxon>
        <taxon>Dictyostelia</taxon>
        <taxon>Dictyosteliales</taxon>
        <taxon>Raperosteliaceae</taxon>
        <taxon>Tieghemostelium</taxon>
    </lineage>
</organism>
<comment type="function">
    <text evidence="3">Terpene synthase that converts its substrate farnesyl diphosphate (FPP) into the sesquiterpene protoillud-7-ene.</text>
</comment>
<comment type="catalytic activity">
    <reaction evidence="3">
        <text>(2E,6E)-farnesyl diphosphate = (2S,3R,6S,9S)-(-)-protoillud-7-ene + diphosphate</text>
        <dbReference type="Rhea" id="RHEA:53628"/>
        <dbReference type="ChEBI" id="CHEBI:33019"/>
        <dbReference type="ChEBI" id="CHEBI:137530"/>
        <dbReference type="ChEBI" id="CHEBI:175763"/>
        <dbReference type="EC" id="4.2.3.160"/>
    </reaction>
    <physiologicalReaction direction="left-to-right" evidence="3">
        <dbReference type="Rhea" id="RHEA:53629"/>
    </physiologicalReaction>
</comment>
<comment type="domain">
    <text evidence="2">Contains several highly conserved motifs that are important for catalytic activity including the aspartate-rich 'DDxx(x)D/E' motif and the 'NDxxSxxxD/E' motif, both of which are involved in complexing metal ions to coordinate the binding of the isoprenyl diphosphate substrate in the active site.</text>
</comment>
<comment type="similarity">
    <text evidence="5">Belongs to the terpene synthase family.</text>
</comment>
<protein>
    <recommendedName>
        <fullName evidence="4">Terpene synthase 1</fullName>
        <ecNumber evidence="3">4.2.3.160</ecNumber>
    </recommendedName>
</protein>
<reference key="1">
    <citation type="journal article" date="2018" name="Sci. Rep.">
        <title>Diversity and Functional Evolution of Terpene Synthases in Dictyostelid Social Amoebae.</title>
        <authorList>
            <person name="Chen X."/>
            <person name="Kollner T.G."/>
            <person name="Shaulsky G."/>
            <person name="Jia Q."/>
            <person name="Dickschat J.S."/>
            <person name="Gershenzon J."/>
            <person name="Chen F."/>
        </authorList>
    </citation>
    <scope>NUCLEOTIDE SEQUENCE [MRNA]</scope>
    <scope>FUNCTION</scope>
    <scope>CATALYTIC ACTIVITY</scope>
</reference>
<reference key="2">
    <citation type="submission" date="2015-12" db="EMBL/GenBank/DDBJ databases">
        <title>Dictyostelia acquired genes for synthesis and detection of signals that induce cell-type specialization by lateral gene transfer from prokaryotes.</title>
        <authorList>
            <person name="Gloeckner G."/>
            <person name="Schaap P."/>
        </authorList>
    </citation>
    <scope>NUCLEOTIDE SEQUENCE [LARGE SCALE GENOMIC DNA]</scope>
    <source>
        <strain>TK</strain>
    </source>
</reference>